<name>MURG_SALAR</name>
<accession>A9MQC2</accession>
<organism>
    <name type="scientific">Salmonella arizonae (strain ATCC BAA-731 / CDC346-86 / RSK2980)</name>
    <dbReference type="NCBI Taxonomy" id="41514"/>
    <lineage>
        <taxon>Bacteria</taxon>
        <taxon>Pseudomonadati</taxon>
        <taxon>Pseudomonadota</taxon>
        <taxon>Gammaproteobacteria</taxon>
        <taxon>Enterobacterales</taxon>
        <taxon>Enterobacteriaceae</taxon>
        <taxon>Salmonella</taxon>
    </lineage>
</organism>
<reference key="1">
    <citation type="submission" date="2007-11" db="EMBL/GenBank/DDBJ databases">
        <authorList>
            <consortium name="The Salmonella enterica serovar Arizonae Genome Sequencing Project"/>
            <person name="McClelland M."/>
            <person name="Sanderson E.K."/>
            <person name="Porwollik S."/>
            <person name="Spieth J."/>
            <person name="Clifton W.S."/>
            <person name="Fulton R."/>
            <person name="Chunyan W."/>
            <person name="Wollam A."/>
            <person name="Shah N."/>
            <person name="Pepin K."/>
            <person name="Bhonagiri V."/>
            <person name="Nash W."/>
            <person name="Johnson M."/>
            <person name="Thiruvilangam P."/>
            <person name="Wilson R."/>
        </authorList>
    </citation>
    <scope>NUCLEOTIDE SEQUENCE [LARGE SCALE GENOMIC DNA]</scope>
    <source>
        <strain>ATCC BAA-731 / CDC346-86 / RSK2980</strain>
    </source>
</reference>
<evidence type="ECO:0000255" key="1">
    <source>
        <dbReference type="HAMAP-Rule" id="MF_00033"/>
    </source>
</evidence>
<proteinExistence type="inferred from homology"/>
<sequence>MSGQPKRLMVMAGGTGGHVFPGLAVAHHLMAQGWQVRWLGTADRMEADLVPKHGINIEFIRISGLRGKGVKALLAAPLRIFNAWRQARAIMKRFKPDVVLGMGGYVSGPGGLAAWSLGIPVVLHEQNGIAGLTNKWLAKIATTVMQAFPGAFPNAEVVGNPVRTDVLALPLPQTRLVSRDGPIRVLVVGGSQGARVLNQTLPQVAARLGDAVTIWHQSGKGAQHTVEQAYAEAGQPQHKVTEFIDDMAAAYAWADVVVCRSGALTVSEIAAAGLPAIFVPFQHKDRQQYWNALPLENAGAAKILEQPQFTAEAVADTLAGWSRDTLLTMAERARAVSILDATERVASEVIRVART</sequence>
<gene>
    <name evidence="1" type="primary">murG</name>
    <name type="ordered locus">SARI_02873</name>
</gene>
<keyword id="KW-0131">Cell cycle</keyword>
<keyword id="KW-0132">Cell division</keyword>
<keyword id="KW-0997">Cell inner membrane</keyword>
<keyword id="KW-1003">Cell membrane</keyword>
<keyword id="KW-0133">Cell shape</keyword>
<keyword id="KW-0961">Cell wall biogenesis/degradation</keyword>
<keyword id="KW-0328">Glycosyltransferase</keyword>
<keyword id="KW-0472">Membrane</keyword>
<keyword id="KW-0573">Peptidoglycan synthesis</keyword>
<keyword id="KW-1185">Reference proteome</keyword>
<keyword id="KW-0808">Transferase</keyword>
<protein>
    <recommendedName>
        <fullName evidence="1">UDP-N-acetylglucosamine--N-acetylmuramyl-(pentapeptide) pyrophosphoryl-undecaprenol N-acetylglucosamine transferase</fullName>
        <ecNumber evidence="1">2.4.1.227</ecNumber>
    </recommendedName>
    <alternativeName>
        <fullName evidence="1">Undecaprenyl-PP-MurNAc-pentapeptide-UDPGlcNAc GlcNAc transferase</fullName>
    </alternativeName>
</protein>
<feature type="chain" id="PRO_1000074467" description="UDP-N-acetylglucosamine--N-acetylmuramyl-(pentapeptide) pyrophosphoryl-undecaprenol N-acetylglucosamine transferase">
    <location>
        <begin position="1"/>
        <end position="355"/>
    </location>
</feature>
<feature type="binding site" evidence="1">
    <location>
        <begin position="15"/>
        <end position="17"/>
    </location>
    <ligand>
        <name>UDP-N-acetyl-alpha-D-glucosamine</name>
        <dbReference type="ChEBI" id="CHEBI:57705"/>
    </ligand>
</feature>
<feature type="binding site" evidence="1">
    <location>
        <position position="127"/>
    </location>
    <ligand>
        <name>UDP-N-acetyl-alpha-D-glucosamine</name>
        <dbReference type="ChEBI" id="CHEBI:57705"/>
    </ligand>
</feature>
<feature type="binding site" evidence="1">
    <location>
        <position position="163"/>
    </location>
    <ligand>
        <name>UDP-N-acetyl-alpha-D-glucosamine</name>
        <dbReference type="ChEBI" id="CHEBI:57705"/>
    </ligand>
</feature>
<feature type="binding site" evidence="1">
    <location>
        <position position="191"/>
    </location>
    <ligand>
        <name>UDP-N-acetyl-alpha-D-glucosamine</name>
        <dbReference type="ChEBI" id="CHEBI:57705"/>
    </ligand>
</feature>
<feature type="binding site" evidence="1">
    <location>
        <position position="244"/>
    </location>
    <ligand>
        <name>UDP-N-acetyl-alpha-D-glucosamine</name>
        <dbReference type="ChEBI" id="CHEBI:57705"/>
    </ligand>
</feature>
<feature type="binding site" evidence="1">
    <location>
        <begin position="263"/>
        <end position="268"/>
    </location>
    <ligand>
        <name>UDP-N-acetyl-alpha-D-glucosamine</name>
        <dbReference type="ChEBI" id="CHEBI:57705"/>
    </ligand>
</feature>
<feature type="binding site" evidence="1">
    <location>
        <position position="288"/>
    </location>
    <ligand>
        <name>UDP-N-acetyl-alpha-D-glucosamine</name>
        <dbReference type="ChEBI" id="CHEBI:57705"/>
    </ligand>
</feature>
<dbReference type="EC" id="2.4.1.227" evidence="1"/>
<dbReference type="EMBL" id="CP000880">
    <property type="protein sequence ID" value="ABX22720.1"/>
    <property type="molecule type" value="Genomic_DNA"/>
</dbReference>
<dbReference type="SMR" id="A9MQC2"/>
<dbReference type="STRING" id="41514.SARI_02873"/>
<dbReference type="CAZy" id="GT28">
    <property type="family name" value="Glycosyltransferase Family 28"/>
</dbReference>
<dbReference type="KEGG" id="ses:SARI_02873"/>
<dbReference type="HOGENOM" id="CLU_037404_2_0_6"/>
<dbReference type="UniPathway" id="UPA00219"/>
<dbReference type="Proteomes" id="UP000002084">
    <property type="component" value="Chromosome"/>
</dbReference>
<dbReference type="GO" id="GO:0005886">
    <property type="term" value="C:plasma membrane"/>
    <property type="evidence" value="ECO:0007669"/>
    <property type="project" value="UniProtKB-SubCell"/>
</dbReference>
<dbReference type="GO" id="GO:0051991">
    <property type="term" value="F:UDP-N-acetyl-D-glucosamine:N-acetylmuramoyl-L-alanyl-D-glutamyl-meso-2,6-diaminopimelyl-D-alanyl-D-alanine-diphosphoundecaprenol 4-beta-N-acetylglucosaminlytransferase activity"/>
    <property type="evidence" value="ECO:0007669"/>
    <property type="project" value="RHEA"/>
</dbReference>
<dbReference type="GO" id="GO:0050511">
    <property type="term" value="F:undecaprenyldiphospho-muramoylpentapeptide beta-N-acetylglucosaminyltransferase activity"/>
    <property type="evidence" value="ECO:0007669"/>
    <property type="project" value="UniProtKB-UniRule"/>
</dbReference>
<dbReference type="GO" id="GO:0005975">
    <property type="term" value="P:carbohydrate metabolic process"/>
    <property type="evidence" value="ECO:0007669"/>
    <property type="project" value="InterPro"/>
</dbReference>
<dbReference type="GO" id="GO:0051301">
    <property type="term" value="P:cell division"/>
    <property type="evidence" value="ECO:0007669"/>
    <property type="project" value="UniProtKB-KW"/>
</dbReference>
<dbReference type="GO" id="GO:0071555">
    <property type="term" value="P:cell wall organization"/>
    <property type="evidence" value="ECO:0007669"/>
    <property type="project" value="UniProtKB-KW"/>
</dbReference>
<dbReference type="GO" id="GO:0030259">
    <property type="term" value="P:lipid glycosylation"/>
    <property type="evidence" value="ECO:0007669"/>
    <property type="project" value="UniProtKB-UniRule"/>
</dbReference>
<dbReference type="GO" id="GO:0009252">
    <property type="term" value="P:peptidoglycan biosynthetic process"/>
    <property type="evidence" value="ECO:0007669"/>
    <property type="project" value="UniProtKB-UniRule"/>
</dbReference>
<dbReference type="GO" id="GO:0008360">
    <property type="term" value="P:regulation of cell shape"/>
    <property type="evidence" value="ECO:0007669"/>
    <property type="project" value="UniProtKB-KW"/>
</dbReference>
<dbReference type="CDD" id="cd03785">
    <property type="entry name" value="GT28_MurG"/>
    <property type="match status" value="1"/>
</dbReference>
<dbReference type="FunFam" id="3.40.50.2000:FF:000016">
    <property type="entry name" value="UDP-N-acetylglucosamine--N-acetylmuramyl-(pentapeptide) pyrophosphoryl-undecaprenol N-acetylglucosamine transferase"/>
    <property type="match status" value="1"/>
</dbReference>
<dbReference type="FunFam" id="3.40.50.2000:FF:000018">
    <property type="entry name" value="UDP-N-acetylglucosamine--N-acetylmuramyl-(pentapeptide) pyrophosphoryl-undecaprenol N-acetylglucosamine transferase"/>
    <property type="match status" value="1"/>
</dbReference>
<dbReference type="Gene3D" id="3.40.50.2000">
    <property type="entry name" value="Glycogen Phosphorylase B"/>
    <property type="match status" value="2"/>
</dbReference>
<dbReference type="HAMAP" id="MF_00033">
    <property type="entry name" value="MurG"/>
    <property type="match status" value="1"/>
</dbReference>
<dbReference type="InterPro" id="IPR006009">
    <property type="entry name" value="GlcNAc_MurG"/>
</dbReference>
<dbReference type="InterPro" id="IPR007235">
    <property type="entry name" value="Glyco_trans_28_C"/>
</dbReference>
<dbReference type="InterPro" id="IPR004276">
    <property type="entry name" value="GlycoTrans_28_N"/>
</dbReference>
<dbReference type="NCBIfam" id="TIGR01133">
    <property type="entry name" value="murG"/>
    <property type="match status" value="1"/>
</dbReference>
<dbReference type="PANTHER" id="PTHR21015:SF22">
    <property type="entry name" value="GLYCOSYLTRANSFERASE"/>
    <property type="match status" value="1"/>
</dbReference>
<dbReference type="PANTHER" id="PTHR21015">
    <property type="entry name" value="UDP-N-ACETYLGLUCOSAMINE--N-ACETYLMURAMYL-(PENTAPEPTIDE) PYROPHOSPHORYL-UNDECAPRENOL N-ACETYLGLUCOSAMINE TRANSFERASE 1"/>
    <property type="match status" value="1"/>
</dbReference>
<dbReference type="Pfam" id="PF04101">
    <property type="entry name" value="Glyco_tran_28_C"/>
    <property type="match status" value="1"/>
</dbReference>
<dbReference type="Pfam" id="PF03033">
    <property type="entry name" value="Glyco_transf_28"/>
    <property type="match status" value="1"/>
</dbReference>
<dbReference type="SUPFAM" id="SSF53756">
    <property type="entry name" value="UDP-Glycosyltransferase/glycogen phosphorylase"/>
    <property type="match status" value="1"/>
</dbReference>
<comment type="function">
    <text evidence="1">Cell wall formation. Catalyzes the transfer of a GlcNAc subunit on undecaprenyl-pyrophosphoryl-MurNAc-pentapeptide (lipid intermediate I) to form undecaprenyl-pyrophosphoryl-MurNAc-(pentapeptide)GlcNAc (lipid intermediate II).</text>
</comment>
<comment type="catalytic activity">
    <reaction evidence="1">
        <text>di-trans,octa-cis-undecaprenyl diphospho-N-acetyl-alpha-D-muramoyl-L-alanyl-D-glutamyl-meso-2,6-diaminopimeloyl-D-alanyl-D-alanine + UDP-N-acetyl-alpha-D-glucosamine = di-trans,octa-cis-undecaprenyl diphospho-[N-acetyl-alpha-D-glucosaminyl-(1-&gt;4)]-N-acetyl-alpha-D-muramoyl-L-alanyl-D-glutamyl-meso-2,6-diaminopimeloyl-D-alanyl-D-alanine + UDP + H(+)</text>
        <dbReference type="Rhea" id="RHEA:31227"/>
        <dbReference type="ChEBI" id="CHEBI:15378"/>
        <dbReference type="ChEBI" id="CHEBI:57705"/>
        <dbReference type="ChEBI" id="CHEBI:58223"/>
        <dbReference type="ChEBI" id="CHEBI:61387"/>
        <dbReference type="ChEBI" id="CHEBI:61388"/>
        <dbReference type="EC" id="2.4.1.227"/>
    </reaction>
</comment>
<comment type="pathway">
    <text evidence="1">Cell wall biogenesis; peptidoglycan biosynthesis.</text>
</comment>
<comment type="subcellular location">
    <subcellularLocation>
        <location evidence="1">Cell inner membrane</location>
        <topology evidence="1">Peripheral membrane protein</topology>
        <orientation evidence="1">Cytoplasmic side</orientation>
    </subcellularLocation>
</comment>
<comment type="similarity">
    <text evidence="1">Belongs to the glycosyltransferase 28 family. MurG subfamily.</text>
</comment>